<organism>
    <name type="scientific">Streptococcus pyogenes serotype M49 (strain NZ131)</name>
    <dbReference type="NCBI Taxonomy" id="471876"/>
    <lineage>
        <taxon>Bacteria</taxon>
        <taxon>Bacillati</taxon>
        <taxon>Bacillota</taxon>
        <taxon>Bacilli</taxon>
        <taxon>Lactobacillales</taxon>
        <taxon>Streptococcaceae</taxon>
        <taxon>Streptococcus</taxon>
    </lineage>
</organism>
<comment type="function">
    <text evidence="1">Catalyzes the conversion of uracil and 5-phospho-alpha-D-ribose 1-diphosphate (PRPP) to UMP and diphosphate.</text>
</comment>
<comment type="catalytic activity">
    <reaction evidence="1">
        <text>UMP + diphosphate = 5-phospho-alpha-D-ribose 1-diphosphate + uracil</text>
        <dbReference type="Rhea" id="RHEA:13017"/>
        <dbReference type="ChEBI" id="CHEBI:17568"/>
        <dbReference type="ChEBI" id="CHEBI:33019"/>
        <dbReference type="ChEBI" id="CHEBI:57865"/>
        <dbReference type="ChEBI" id="CHEBI:58017"/>
        <dbReference type="EC" id="2.4.2.9"/>
    </reaction>
</comment>
<comment type="cofactor">
    <cofactor evidence="1">
        <name>Mg(2+)</name>
        <dbReference type="ChEBI" id="CHEBI:18420"/>
    </cofactor>
    <text evidence="1">Binds 1 Mg(2+) ion per subunit. The magnesium is bound as Mg-PRPP.</text>
</comment>
<comment type="activity regulation">
    <text evidence="1">Allosterically activated by GTP.</text>
</comment>
<comment type="pathway">
    <text evidence="1">Pyrimidine metabolism; UMP biosynthesis via salvage pathway; UMP from uracil: step 1/1.</text>
</comment>
<comment type="similarity">
    <text evidence="1">Belongs to the UPRTase family.</text>
</comment>
<proteinExistence type="inferred from homology"/>
<protein>
    <recommendedName>
        <fullName evidence="1">Uracil phosphoribosyltransferase</fullName>
        <ecNumber evidence="1">2.4.2.9</ecNumber>
    </recommendedName>
    <alternativeName>
        <fullName evidence="1">UMP pyrophosphorylase</fullName>
    </alternativeName>
    <alternativeName>
        <fullName evidence="1">UPRTase</fullName>
    </alternativeName>
</protein>
<keyword id="KW-0021">Allosteric enzyme</keyword>
<keyword id="KW-0328">Glycosyltransferase</keyword>
<keyword id="KW-0342">GTP-binding</keyword>
<keyword id="KW-0460">Magnesium</keyword>
<keyword id="KW-0547">Nucleotide-binding</keyword>
<keyword id="KW-0808">Transferase</keyword>
<name>UPP_STRPZ</name>
<feature type="chain" id="PRO_1000139169" description="Uracil phosphoribosyltransferase">
    <location>
        <begin position="1"/>
        <end position="209"/>
    </location>
</feature>
<feature type="binding site" evidence="1">
    <location>
        <position position="79"/>
    </location>
    <ligand>
        <name>5-phospho-alpha-D-ribose 1-diphosphate</name>
        <dbReference type="ChEBI" id="CHEBI:58017"/>
    </ligand>
</feature>
<feature type="binding site" evidence="1">
    <location>
        <position position="104"/>
    </location>
    <ligand>
        <name>5-phospho-alpha-D-ribose 1-diphosphate</name>
        <dbReference type="ChEBI" id="CHEBI:58017"/>
    </ligand>
</feature>
<feature type="binding site" evidence="1">
    <location>
        <begin position="131"/>
        <end position="139"/>
    </location>
    <ligand>
        <name>5-phospho-alpha-D-ribose 1-diphosphate</name>
        <dbReference type="ChEBI" id="CHEBI:58017"/>
    </ligand>
</feature>
<feature type="binding site" evidence="1">
    <location>
        <position position="194"/>
    </location>
    <ligand>
        <name>uracil</name>
        <dbReference type="ChEBI" id="CHEBI:17568"/>
    </ligand>
</feature>
<feature type="binding site" evidence="1">
    <location>
        <begin position="199"/>
        <end position="201"/>
    </location>
    <ligand>
        <name>uracil</name>
        <dbReference type="ChEBI" id="CHEBI:17568"/>
    </ligand>
</feature>
<feature type="binding site" evidence="1">
    <location>
        <position position="200"/>
    </location>
    <ligand>
        <name>5-phospho-alpha-D-ribose 1-diphosphate</name>
        <dbReference type="ChEBI" id="CHEBI:58017"/>
    </ligand>
</feature>
<evidence type="ECO:0000255" key="1">
    <source>
        <dbReference type="HAMAP-Rule" id="MF_01218"/>
    </source>
</evidence>
<accession>B5XJZ7</accession>
<sequence>MGKCQVISHPLIQHKLSILRRQTTSTKDFRELVNEIAMLMGYEVSRDLPLEDVDIQTPVSKTVQKQLAGKKLAIVPILRAGIGMVDGLLSLVPAAKVGHIGMYRNEETLEPVEYLVKLPEDINQRQIFLVDPMLATGGSAILAVDSLKKRGAANIKFVCLVAAPEGVKKLQEAHPDIDIFTAALDDHLNDHGYIVPGLGDAGDRLFGPK</sequence>
<gene>
    <name evidence="1" type="primary">upp</name>
    <name type="ordered locus">Spy49_0322</name>
</gene>
<dbReference type="EC" id="2.4.2.9" evidence="1"/>
<dbReference type="EMBL" id="CP000829">
    <property type="protein sequence ID" value="ACI60659.1"/>
    <property type="molecule type" value="Genomic_DNA"/>
</dbReference>
<dbReference type="SMR" id="B5XJZ7"/>
<dbReference type="KEGG" id="soz:Spy49_0322"/>
<dbReference type="HOGENOM" id="CLU_067096_2_2_9"/>
<dbReference type="UniPathway" id="UPA00574">
    <property type="reaction ID" value="UER00636"/>
</dbReference>
<dbReference type="Proteomes" id="UP000001039">
    <property type="component" value="Chromosome"/>
</dbReference>
<dbReference type="GO" id="GO:0005525">
    <property type="term" value="F:GTP binding"/>
    <property type="evidence" value="ECO:0007669"/>
    <property type="project" value="UniProtKB-KW"/>
</dbReference>
<dbReference type="GO" id="GO:0000287">
    <property type="term" value="F:magnesium ion binding"/>
    <property type="evidence" value="ECO:0007669"/>
    <property type="project" value="UniProtKB-UniRule"/>
</dbReference>
<dbReference type="GO" id="GO:0004845">
    <property type="term" value="F:uracil phosphoribosyltransferase activity"/>
    <property type="evidence" value="ECO:0007669"/>
    <property type="project" value="UniProtKB-UniRule"/>
</dbReference>
<dbReference type="GO" id="GO:0044206">
    <property type="term" value="P:UMP salvage"/>
    <property type="evidence" value="ECO:0007669"/>
    <property type="project" value="UniProtKB-UniRule"/>
</dbReference>
<dbReference type="GO" id="GO:0006223">
    <property type="term" value="P:uracil salvage"/>
    <property type="evidence" value="ECO:0007669"/>
    <property type="project" value="InterPro"/>
</dbReference>
<dbReference type="CDD" id="cd06223">
    <property type="entry name" value="PRTases_typeI"/>
    <property type="match status" value="1"/>
</dbReference>
<dbReference type="FunFam" id="3.40.50.2020:FF:000003">
    <property type="entry name" value="Uracil phosphoribosyltransferase"/>
    <property type="match status" value="1"/>
</dbReference>
<dbReference type="Gene3D" id="3.40.50.2020">
    <property type="match status" value="1"/>
</dbReference>
<dbReference type="HAMAP" id="MF_01218_B">
    <property type="entry name" value="Upp_B"/>
    <property type="match status" value="1"/>
</dbReference>
<dbReference type="InterPro" id="IPR000836">
    <property type="entry name" value="PRibTrfase_dom"/>
</dbReference>
<dbReference type="InterPro" id="IPR029057">
    <property type="entry name" value="PRTase-like"/>
</dbReference>
<dbReference type="InterPro" id="IPR034332">
    <property type="entry name" value="Upp_B"/>
</dbReference>
<dbReference type="InterPro" id="IPR050054">
    <property type="entry name" value="UPRTase/APRTase"/>
</dbReference>
<dbReference type="InterPro" id="IPR005765">
    <property type="entry name" value="Ura_phspho_trans"/>
</dbReference>
<dbReference type="NCBIfam" id="NF001097">
    <property type="entry name" value="PRK00129.1"/>
    <property type="match status" value="1"/>
</dbReference>
<dbReference type="NCBIfam" id="TIGR01091">
    <property type="entry name" value="upp"/>
    <property type="match status" value="1"/>
</dbReference>
<dbReference type="PANTHER" id="PTHR32315">
    <property type="entry name" value="ADENINE PHOSPHORIBOSYLTRANSFERASE"/>
    <property type="match status" value="1"/>
</dbReference>
<dbReference type="PANTHER" id="PTHR32315:SF4">
    <property type="entry name" value="URACIL PHOSPHORIBOSYLTRANSFERASE, CHLOROPLASTIC"/>
    <property type="match status" value="1"/>
</dbReference>
<dbReference type="Pfam" id="PF14681">
    <property type="entry name" value="UPRTase"/>
    <property type="match status" value="1"/>
</dbReference>
<dbReference type="SUPFAM" id="SSF53271">
    <property type="entry name" value="PRTase-like"/>
    <property type="match status" value="1"/>
</dbReference>
<reference key="1">
    <citation type="journal article" date="2008" name="J. Bacteriol.">
        <title>Genome sequence of a nephritogenic and highly transformable M49 strain of Streptococcus pyogenes.</title>
        <authorList>
            <person name="McShan W.M."/>
            <person name="Ferretti J.J."/>
            <person name="Karasawa T."/>
            <person name="Suvorov A.N."/>
            <person name="Lin S."/>
            <person name="Qin B."/>
            <person name="Jia H."/>
            <person name="Kenton S."/>
            <person name="Najar F."/>
            <person name="Wu H."/>
            <person name="Scott J."/>
            <person name="Roe B.A."/>
            <person name="Savic D.J."/>
        </authorList>
    </citation>
    <scope>NUCLEOTIDE SEQUENCE [LARGE SCALE GENOMIC DNA]</scope>
    <source>
        <strain>NZ131</strain>
    </source>
</reference>